<name>ISPD_CLOAB</name>
<dbReference type="EC" id="2.7.7.60" evidence="1"/>
<dbReference type="EMBL" id="AE001437">
    <property type="protein sequence ID" value="AAK81121.1"/>
    <property type="molecule type" value="Genomic_DNA"/>
</dbReference>
<dbReference type="PIR" id="F97291">
    <property type="entry name" value="F97291"/>
</dbReference>
<dbReference type="RefSeq" id="NP_349781.1">
    <property type="nucleotide sequence ID" value="NC_003030.1"/>
</dbReference>
<dbReference type="RefSeq" id="WP_010966461.1">
    <property type="nucleotide sequence ID" value="NC_003030.1"/>
</dbReference>
<dbReference type="SMR" id="Q97EC9"/>
<dbReference type="STRING" id="272562.CA_C3184"/>
<dbReference type="GeneID" id="44999671"/>
<dbReference type="KEGG" id="cac:CA_C3184"/>
<dbReference type="PATRIC" id="fig|272562.8.peg.3364"/>
<dbReference type="eggNOG" id="COG1211">
    <property type="taxonomic scope" value="Bacteria"/>
</dbReference>
<dbReference type="HOGENOM" id="CLU_061281_2_2_9"/>
<dbReference type="OrthoDB" id="9806837at2"/>
<dbReference type="UniPathway" id="UPA00056">
    <property type="reaction ID" value="UER00093"/>
</dbReference>
<dbReference type="Proteomes" id="UP000000814">
    <property type="component" value="Chromosome"/>
</dbReference>
<dbReference type="GO" id="GO:0050518">
    <property type="term" value="F:2-C-methyl-D-erythritol 4-phosphate cytidylyltransferase activity"/>
    <property type="evidence" value="ECO:0007669"/>
    <property type="project" value="UniProtKB-UniRule"/>
</dbReference>
<dbReference type="GO" id="GO:0019288">
    <property type="term" value="P:isopentenyl diphosphate biosynthetic process, methylerythritol 4-phosphate pathway"/>
    <property type="evidence" value="ECO:0007669"/>
    <property type="project" value="UniProtKB-UniRule"/>
</dbReference>
<dbReference type="CDD" id="cd02516">
    <property type="entry name" value="CDP-ME_synthetase"/>
    <property type="match status" value="1"/>
</dbReference>
<dbReference type="FunFam" id="3.90.550.10:FF:000003">
    <property type="entry name" value="2-C-methyl-D-erythritol 4-phosphate cytidylyltransferase"/>
    <property type="match status" value="1"/>
</dbReference>
<dbReference type="Gene3D" id="3.90.550.10">
    <property type="entry name" value="Spore Coat Polysaccharide Biosynthesis Protein SpsA, Chain A"/>
    <property type="match status" value="1"/>
</dbReference>
<dbReference type="HAMAP" id="MF_00108">
    <property type="entry name" value="IspD"/>
    <property type="match status" value="1"/>
</dbReference>
<dbReference type="InterPro" id="IPR001228">
    <property type="entry name" value="IspD"/>
</dbReference>
<dbReference type="InterPro" id="IPR034683">
    <property type="entry name" value="IspD/TarI"/>
</dbReference>
<dbReference type="InterPro" id="IPR050088">
    <property type="entry name" value="IspD/TarI_cytidylyltransf_bact"/>
</dbReference>
<dbReference type="InterPro" id="IPR018294">
    <property type="entry name" value="ISPD_synthase_CS"/>
</dbReference>
<dbReference type="InterPro" id="IPR029044">
    <property type="entry name" value="Nucleotide-diphossugar_trans"/>
</dbReference>
<dbReference type="NCBIfam" id="TIGR00453">
    <property type="entry name" value="ispD"/>
    <property type="match status" value="1"/>
</dbReference>
<dbReference type="PANTHER" id="PTHR32125">
    <property type="entry name" value="2-C-METHYL-D-ERYTHRITOL 4-PHOSPHATE CYTIDYLYLTRANSFERASE, CHLOROPLASTIC"/>
    <property type="match status" value="1"/>
</dbReference>
<dbReference type="PANTHER" id="PTHR32125:SF4">
    <property type="entry name" value="2-C-METHYL-D-ERYTHRITOL 4-PHOSPHATE CYTIDYLYLTRANSFERASE, CHLOROPLASTIC"/>
    <property type="match status" value="1"/>
</dbReference>
<dbReference type="Pfam" id="PF01128">
    <property type="entry name" value="IspD"/>
    <property type="match status" value="1"/>
</dbReference>
<dbReference type="SUPFAM" id="SSF53448">
    <property type="entry name" value="Nucleotide-diphospho-sugar transferases"/>
    <property type="match status" value="1"/>
</dbReference>
<dbReference type="PROSITE" id="PS01295">
    <property type="entry name" value="ISPD"/>
    <property type="match status" value="1"/>
</dbReference>
<keyword id="KW-0414">Isoprene biosynthesis</keyword>
<keyword id="KW-0548">Nucleotidyltransferase</keyword>
<keyword id="KW-1185">Reference proteome</keyword>
<keyword id="KW-0808">Transferase</keyword>
<proteinExistence type="inferred from homology"/>
<gene>
    <name evidence="1" type="primary">ispD</name>
    <name type="ordered locus">CA_C3184</name>
</gene>
<evidence type="ECO:0000255" key="1">
    <source>
        <dbReference type="HAMAP-Rule" id="MF_00108"/>
    </source>
</evidence>
<reference key="1">
    <citation type="journal article" date="2001" name="J. Bacteriol.">
        <title>Genome sequence and comparative analysis of the solvent-producing bacterium Clostridium acetobutylicum.</title>
        <authorList>
            <person name="Noelling J."/>
            <person name="Breton G."/>
            <person name="Omelchenko M.V."/>
            <person name="Makarova K.S."/>
            <person name="Zeng Q."/>
            <person name="Gibson R."/>
            <person name="Lee H.M."/>
            <person name="Dubois J."/>
            <person name="Qiu D."/>
            <person name="Hitti J."/>
            <person name="Wolf Y.I."/>
            <person name="Tatusov R.L."/>
            <person name="Sabathe F."/>
            <person name="Doucette-Stamm L.A."/>
            <person name="Soucaille P."/>
            <person name="Daly M.J."/>
            <person name="Bennett G.N."/>
            <person name="Koonin E.V."/>
            <person name="Smith D.R."/>
        </authorList>
    </citation>
    <scope>NUCLEOTIDE SEQUENCE [LARGE SCALE GENOMIC DNA]</scope>
    <source>
        <strain>ATCC 824 / DSM 792 / JCM 1419 / IAM 19013 / LMG 5710 / NBRC 13948 / NRRL B-527 / VKM B-1787 / 2291 / W</strain>
    </source>
</reference>
<sequence length="229" mass="25627">MNCAIIMAAGRGSRMKVNKNKQFILIQGKPILAYTIDKFQRSPLIDEIIIVAAESEINFCMQEIVYKYKFNKVKNIVSGGSERQQSVMNGLKAVKSANIVLIHDGARPFVDNKIIENGIKYAEKYGGAACGVQPKDTIKIKSEDGFSEKTIDRSKLFCVQTPQCFKYDSILKAHINAEKEGILATDDTMIFEMSGNKVYLYDGSYENLKITTPDDLYAAETLLKKNSIQ</sequence>
<comment type="function">
    <text evidence="1">Catalyzes the formation of 4-diphosphocytidyl-2-C-methyl-D-erythritol from CTP and 2-C-methyl-D-erythritol 4-phosphate (MEP).</text>
</comment>
<comment type="catalytic activity">
    <reaction evidence="1">
        <text>2-C-methyl-D-erythritol 4-phosphate + CTP + H(+) = 4-CDP-2-C-methyl-D-erythritol + diphosphate</text>
        <dbReference type="Rhea" id="RHEA:13429"/>
        <dbReference type="ChEBI" id="CHEBI:15378"/>
        <dbReference type="ChEBI" id="CHEBI:33019"/>
        <dbReference type="ChEBI" id="CHEBI:37563"/>
        <dbReference type="ChEBI" id="CHEBI:57823"/>
        <dbReference type="ChEBI" id="CHEBI:58262"/>
        <dbReference type="EC" id="2.7.7.60"/>
    </reaction>
</comment>
<comment type="pathway">
    <text evidence="1">Isoprenoid biosynthesis; isopentenyl diphosphate biosynthesis via DXP pathway; isopentenyl diphosphate from 1-deoxy-D-xylulose 5-phosphate: step 2/6.</text>
</comment>
<comment type="similarity">
    <text evidence="1">Belongs to the IspD/TarI cytidylyltransferase family. IspD subfamily.</text>
</comment>
<feature type="chain" id="PRO_0000075565" description="2-C-methyl-D-erythritol 4-phosphate cytidylyltransferase">
    <location>
        <begin position="1"/>
        <end position="229"/>
    </location>
</feature>
<feature type="site" description="Transition state stabilizer" evidence="1">
    <location>
        <position position="14"/>
    </location>
</feature>
<feature type="site" description="Transition state stabilizer" evidence="1">
    <location>
        <position position="21"/>
    </location>
</feature>
<feature type="site" description="Positions MEP for the nucleophilic attack" evidence="1">
    <location>
        <position position="153"/>
    </location>
</feature>
<feature type="site" description="Positions MEP for the nucleophilic attack" evidence="1">
    <location>
        <position position="209"/>
    </location>
</feature>
<accession>Q97EC9</accession>
<organism>
    <name type="scientific">Clostridium acetobutylicum (strain ATCC 824 / DSM 792 / JCM 1419 / IAM 19013 / LMG 5710 / NBRC 13948 / NRRL B-527 / VKM B-1787 / 2291 / W)</name>
    <dbReference type="NCBI Taxonomy" id="272562"/>
    <lineage>
        <taxon>Bacteria</taxon>
        <taxon>Bacillati</taxon>
        <taxon>Bacillota</taxon>
        <taxon>Clostridia</taxon>
        <taxon>Eubacteriales</taxon>
        <taxon>Clostridiaceae</taxon>
        <taxon>Clostridium</taxon>
    </lineage>
</organism>
<protein>
    <recommendedName>
        <fullName evidence="1">2-C-methyl-D-erythritol 4-phosphate cytidylyltransferase</fullName>
        <ecNumber evidence="1">2.7.7.60</ecNumber>
    </recommendedName>
    <alternativeName>
        <fullName evidence="1">4-diphosphocytidyl-2C-methyl-D-erythritol synthase</fullName>
    </alternativeName>
    <alternativeName>
        <fullName evidence="1">MEP cytidylyltransferase</fullName>
        <shortName evidence="1">MCT</shortName>
    </alternativeName>
</protein>